<comment type="function">
    <text evidence="1">Forms part of the ribosomal stalk which helps the ribosome interact with GTP-bound translation factors. Is thus essential for accurate translation.</text>
</comment>
<comment type="subunit">
    <text evidence="1">Homodimer. Part of the ribosomal stalk of the 50S ribosomal subunit. Forms a multimeric L10(L12)X complex, where L10 forms an elongated spine to which 2 to 4 L12 dimers bind in a sequential fashion. Binds GTP-bound translation factors.</text>
</comment>
<comment type="similarity">
    <text evidence="1">Belongs to the bacterial ribosomal protein bL12 family.</text>
</comment>
<gene>
    <name evidence="1" type="primary">rplL</name>
    <name type="ordered locus">Shewmr4_0191</name>
</gene>
<sequence>MSITKDQILEAFAAMSVMEVVELIEAMEEKFGVSAAAAVVAGGAADAGAAAEEQTEFNVILTAHGDNKVAVIKAIRGATGLGLKEAKAMSEAAPVAVKEGVSKEEAEALKKELVEAGATVEIK</sequence>
<feature type="chain" id="PRO_1000007087" description="Large ribosomal subunit protein bL12">
    <location>
        <begin position="1"/>
        <end position="123"/>
    </location>
</feature>
<evidence type="ECO:0000255" key="1">
    <source>
        <dbReference type="HAMAP-Rule" id="MF_00368"/>
    </source>
</evidence>
<evidence type="ECO:0000305" key="2"/>
<dbReference type="EMBL" id="CP000446">
    <property type="protein sequence ID" value="ABI37272.1"/>
    <property type="molecule type" value="Genomic_DNA"/>
</dbReference>
<dbReference type="RefSeq" id="WP_011621021.1">
    <property type="nucleotide sequence ID" value="NC_008321.1"/>
</dbReference>
<dbReference type="SMR" id="Q0HNU5"/>
<dbReference type="KEGG" id="she:Shewmr4_0191"/>
<dbReference type="HOGENOM" id="CLU_086499_3_2_6"/>
<dbReference type="GO" id="GO:0022625">
    <property type="term" value="C:cytosolic large ribosomal subunit"/>
    <property type="evidence" value="ECO:0007669"/>
    <property type="project" value="TreeGrafter"/>
</dbReference>
<dbReference type="GO" id="GO:0003729">
    <property type="term" value="F:mRNA binding"/>
    <property type="evidence" value="ECO:0007669"/>
    <property type="project" value="TreeGrafter"/>
</dbReference>
<dbReference type="GO" id="GO:0003735">
    <property type="term" value="F:structural constituent of ribosome"/>
    <property type="evidence" value="ECO:0007669"/>
    <property type="project" value="InterPro"/>
</dbReference>
<dbReference type="GO" id="GO:0006412">
    <property type="term" value="P:translation"/>
    <property type="evidence" value="ECO:0007669"/>
    <property type="project" value="UniProtKB-UniRule"/>
</dbReference>
<dbReference type="CDD" id="cd00387">
    <property type="entry name" value="Ribosomal_L7_L12"/>
    <property type="match status" value="1"/>
</dbReference>
<dbReference type="FunFam" id="1.20.5.710:FF:000001">
    <property type="entry name" value="50S ribosomal protein L7/L12"/>
    <property type="match status" value="1"/>
</dbReference>
<dbReference type="FunFam" id="3.30.1390.10:FF:000001">
    <property type="entry name" value="50S ribosomal protein L7/L12"/>
    <property type="match status" value="1"/>
</dbReference>
<dbReference type="Gene3D" id="3.30.1390.10">
    <property type="match status" value="1"/>
</dbReference>
<dbReference type="Gene3D" id="1.20.5.710">
    <property type="entry name" value="Single helix bin"/>
    <property type="match status" value="1"/>
</dbReference>
<dbReference type="HAMAP" id="MF_00368">
    <property type="entry name" value="Ribosomal_bL12"/>
    <property type="match status" value="1"/>
</dbReference>
<dbReference type="InterPro" id="IPR000206">
    <property type="entry name" value="Ribosomal_bL12"/>
</dbReference>
<dbReference type="InterPro" id="IPR013823">
    <property type="entry name" value="Ribosomal_bL12_C"/>
</dbReference>
<dbReference type="InterPro" id="IPR014719">
    <property type="entry name" value="Ribosomal_bL12_C/ClpS-like"/>
</dbReference>
<dbReference type="InterPro" id="IPR008932">
    <property type="entry name" value="Ribosomal_bL12_oligo"/>
</dbReference>
<dbReference type="InterPro" id="IPR036235">
    <property type="entry name" value="Ribosomal_bL12_oligo_N_sf"/>
</dbReference>
<dbReference type="NCBIfam" id="TIGR00855">
    <property type="entry name" value="L12"/>
    <property type="match status" value="1"/>
</dbReference>
<dbReference type="PANTHER" id="PTHR45987">
    <property type="entry name" value="39S RIBOSOMAL PROTEIN L12"/>
    <property type="match status" value="1"/>
</dbReference>
<dbReference type="PANTHER" id="PTHR45987:SF4">
    <property type="entry name" value="LARGE RIBOSOMAL SUBUNIT PROTEIN BL12M"/>
    <property type="match status" value="1"/>
</dbReference>
<dbReference type="Pfam" id="PF00542">
    <property type="entry name" value="Ribosomal_L12"/>
    <property type="match status" value="1"/>
</dbReference>
<dbReference type="Pfam" id="PF16320">
    <property type="entry name" value="Ribosomal_L12_N"/>
    <property type="match status" value="1"/>
</dbReference>
<dbReference type="SUPFAM" id="SSF54736">
    <property type="entry name" value="ClpS-like"/>
    <property type="match status" value="1"/>
</dbReference>
<dbReference type="SUPFAM" id="SSF48300">
    <property type="entry name" value="Ribosomal protein L7/12, oligomerisation (N-terminal) domain"/>
    <property type="match status" value="1"/>
</dbReference>
<organism>
    <name type="scientific">Shewanella sp. (strain MR-4)</name>
    <dbReference type="NCBI Taxonomy" id="60480"/>
    <lineage>
        <taxon>Bacteria</taxon>
        <taxon>Pseudomonadati</taxon>
        <taxon>Pseudomonadota</taxon>
        <taxon>Gammaproteobacteria</taxon>
        <taxon>Alteromonadales</taxon>
        <taxon>Shewanellaceae</taxon>
        <taxon>Shewanella</taxon>
    </lineage>
</organism>
<keyword id="KW-0687">Ribonucleoprotein</keyword>
<keyword id="KW-0689">Ribosomal protein</keyword>
<name>RL7_SHESM</name>
<proteinExistence type="inferred from homology"/>
<reference key="1">
    <citation type="submission" date="2006-08" db="EMBL/GenBank/DDBJ databases">
        <title>Complete sequence of Shewanella sp. MR-4.</title>
        <authorList>
            <consortium name="US DOE Joint Genome Institute"/>
            <person name="Copeland A."/>
            <person name="Lucas S."/>
            <person name="Lapidus A."/>
            <person name="Barry K."/>
            <person name="Detter J.C."/>
            <person name="Glavina del Rio T."/>
            <person name="Hammon N."/>
            <person name="Israni S."/>
            <person name="Dalin E."/>
            <person name="Tice H."/>
            <person name="Pitluck S."/>
            <person name="Kiss H."/>
            <person name="Brettin T."/>
            <person name="Bruce D."/>
            <person name="Han C."/>
            <person name="Tapia R."/>
            <person name="Gilna P."/>
            <person name="Schmutz J."/>
            <person name="Larimer F."/>
            <person name="Land M."/>
            <person name="Hauser L."/>
            <person name="Kyrpides N."/>
            <person name="Mikhailova N."/>
            <person name="Nealson K."/>
            <person name="Konstantinidis K."/>
            <person name="Klappenbach J."/>
            <person name="Tiedje J."/>
            <person name="Richardson P."/>
        </authorList>
    </citation>
    <scope>NUCLEOTIDE SEQUENCE [LARGE SCALE GENOMIC DNA]</scope>
    <source>
        <strain>MR-4</strain>
    </source>
</reference>
<protein>
    <recommendedName>
        <fullName evidence="1">Large ribosomal subunit protein bL12</fullName>
    </recommendedName>
    <alternativeName>
        <fullName evidence="2">50S ribosomal protein L7/L12</fullName>
    </alternativeName>
</protein>
<accession>Q0HNU5</accession>